<organism>
    <name type="scientific">Klebsiella pneumoniae</name>
    <dbReference type="NCBI Taxonomy" id="573"/>
    <lineage>
        <taxon>Bacteria</taxon>
        <taxon>Pseudomonadati</taxon>
        <taxon>Pseudomonadota</taxon>
        <taxon>Gammaproteobacteria</taxon>
        <taxon>Enterobacterales</taxon>
        <taxon>Enterobacteriaceae</taxon>
        <taxon>Klebsiella/Raoultella group</taxon>
        <taxon>Klebsiella</taxon>
        <taxon>Klebsiella pneumoniae complex</taxon>
    </lineage>
</organism>
<keyword id="KW-0238">DNA-binding</keyword>
<keyword id="KW-0804">Transcription</keyword>
<keyword id="KW-0805">Transcription regulation</keyword>
<proteinExistence type="inferred from homology"/>
<feature type="chain" id="PRO_0000105670" description="Malonate utilization transcriptional regulator">
    <location>
        <begin position="1"/>
        <end position="308"/>
    </location>
</feature>
<feature type="domain" description="HTH lysR-type" evidence="1">
    <location>
        <begin position="9"/>
        <end position="66"/>
    </location>
</feature>
<feature type="DNA-binding region" description="H-T-H motif" evidence="1">
    <location>
        <begin position="26"/>
        <end position="45"/>
    </location>
</feature>
<protein>
    <recommendedName>
        <fullName>Malonate utilization transcriptional regulator</fullName>
    </recommendedName>
</protein>
<reference key="1">
    <citation type="submission" date="1994-09" db="EMBL/GenBank/DDBJ databases">
        <authorList>
            <person name="Peng H."/>
            <person name="Chang H."/>
            <person name="Chaou S."/>
            <person name="Deng W."/>
            <person name="Chiang F."/>
        </authorList>
    </citation>
    <scope>NUCLEOTIDE SEQUENCE [GENOMIC DNA]</scope>
    <source>
        <strain>CG43</strain>
    </source>
</reference>
<accession>P52684</accession>
<dbReference type="EMBL" id="U14004">
    <property type="protein sequence ID" value="AAA21364.1"/>
    <property type="molecule type" value="Genomic_DNA"/>
</dbReference>
<dbReference type="RefSeq" id="WP_004148289.1">
    <property type="nucleotide sequence ID" value="NZ_BAACAI010000029.1"/>
</dbReference>
<dbReference type="SMR" id="P52684"/>
<dbReference type="PATRIC" id="fig|573.1353.peg.2115"/>
<dbReference type="GO" id="GO:0032993">
    <property type="term" value="C:protein-DNA complex"/>
    <property type="evidence" value="ECO:0007669"/>
    <property type="project" value="TreeGrafter"/>
</dbReference>
<dbReference type="GO" id="GO:0003677">
    <property type="term" value="F:DNA binding"/>
    <property type="evidence" value="ECO:0007669"/>
    <property type="project" value="UniProtKB-KW"/>
</dbReference>
<dbReference type="GO" id="GO:0003700">
    <property type="term" value="F:DNA-binding transcription factor activity"/>
    <property type="evidence" value="ECO:0007669"/>
    <property type="project" value="InterPro"/>
</dbReference>
<dbReference type="CDD" id="cd08416">
    <property type="entry name" value="PBP2_MdcR"/>
    <property type="match status" value="1"/>
</dbReference>
<dbReference type="Gene3D" id="3.40.190.290">
    <property type="match status" value="1"/>
</dbReference>
<dbReference type="Gene3D" id="1.10.10.10">
    <property type="entry name" value="Winged helix-like DNA-binding domain superfamily/Winged helix DNA-binding domain"/>
    <property type="match status" value="1"/>
</dbReference>
<dbReference type="InterPro" id="IPR005119">
    <property type="entry name" value="LysR_subst-bd"/>
</dbReference>
<dbReference type="InterPro" id="IPR037400">
    <property type="entry name" value="MdcR_PBP2"/>
</dbReference>
<dbReference type="InterPro" id="IPR000847">
    <property type="entry name" value="Tscrpt_reg_HTH_LysR"/>
</dbReference>
<dbReference type="InterPro" id="IPR036388">
    <property type="entry name" value="WH-like_DNA-bd_sf"/>
</dbReference>
<dbReference type="InterPro" id="IPR036390">
    <property type="entry name" value="WH_DNA-bd_sf"/>
</dbReference>
<dbReference type="PANTHER" id="PTHR30346:SF0">
    <property type="entry name" value="HCA OPERON TRANSCRIPTIONAL ACTIVATOR HCAR"/>
    <property type="match status" value="1"/>
</dbReference>
<dbReference type="PANTHER" id="PTHR30346">
    <property type="entry name" value="TRANSCRIPTIONAL DUAL REGULATOR HCAR-RELATED"/>
    <property type="match status" value="1"/>
</dbReference>
<dbReference type="Pfam" id="PF00126">
    <property type="entry name" value="HTH_1"/>
    <property type="match status" value="1"/>
</dbReference>
<dbReference type="Pfam" id="PF03466">
    <property type="entry name" value="LysR_substrate"/>
    <property type="match status" value="1"/>
</dbReference>
<dbReference type="SUPFAM" id="SSF53850">
    <property type="entry name" value="Periplasmic binding protein-like II"/>
    <property type="match status" value="1"/>
</dbReference>
<dbReference type="SUPFAM" id="SSF46785">
    <property type="entry name" value="Winged helix' DNA-binding domain"/>
    <property type="match status" value="1"/>
</dbReference>
<dbReference type="PROSITE" id="PS50931">
    <property type="entry name" value="HTH_LYSR"/>
    <property type="match status" value="1"/>
</dbReference>
<comment type="function">
    <text>Transcriptional regulator of the mau genes for malonate utilization.</text>
</comment>
<comment type="similarity">
    <text evidence="2">Belongs to the LysR transcriptional regulatory family.</text>
</comment>
<evidence type="ECO:0000255" key="1">
    <source>
        <dbReference type="PROSITE-ProRule" id="PRU00253"/>
    </source>
</evidence>
<evidence type="ECO:0000305" key="2"/>
<name>MAUR_KLEPN</name>
<gene>
    <name type="primary">mauR</name>
</gene>
<sequence length="308" mass="34636">MKDDINQEITFRKLSVFMMFMAKGNIARTAEAMKLSSVSVHRALHTLEEGVGCPLFVHKGRNLLPLQAAWTLLEYCQDVISLMNRGLEATRKVAGVGQGRLRIGTLYSLTLETVPRIIMGMKLRRPELELDLTMGSNQMLLDMLEDDALDAILIATNEGEFNNTAFDVVPLFEDDIFLAAPATERLDASRLADLRDYADRKFVSLAEGFATYAGFREAFHIAGFEPEIVTRVNDIFSMISLVQAGVGFALLPGRMKKVYEKDVQLLKLAEPYQMRQLISIVYSHHRERDADLLALAAEGRMYARSINR</sequence>